<proteinExistence type="inferred from homology"/>
<sequence length="366" mass="39949">MERITVNLAERSYPISIGAGLFEDPAYLSQILSNKNANQKVVVISNVTVAPLYAEKILSQLEQLGCDASLLELPDGEQYKSLDTFNQVMNFLLEGSYARDVVIIALGGGVIGDLVGFASACYQRGVDFIQIPTTLLSQVDSSVGGKTAVNHPLGKNMIGAFYQPKAVIIDTNCLSTLPEREFAAGIAEVIKYGIIYDGAFFDWLEENLDRLYALDEEALTYAIARCCEIKAEVVAQDEKESGIRALLNLGHTFGHAIEAELGYGNWLHGEAVSSGTVMAAKTSHLRGLISQEQLDRIINIMRSAKLPVHTPDTMSFDDFMTHMMRDKKVLSGQLRLVLPTGIGSAEVIADTPQDIIKQAIDFGRDI</sequence>
<reference key="1">
    <citation type="submission" date="2007-08" db="EMBL/GenBank/DDBJ databases">
        <authorList>
            <consortium name="The Vibrio harveyi Genome Sequencing Project"/>
            <person name="Bassler B."/>
            <person name="Clifton S.W."/>
            <person name="Fulton L."/>
            <person name="Delehaunty K."/>
            <person name="Fronick C."/>
            <person name="Harrison M."/>
            <person name="Markivic C."/>
            <person name="Fulton R."/>
            <person name="Tin-Wollam A.-M."/>
            <person name="Shah N."/>
            <person name="Pepin K."/>
            <person name="Nash W."/>
            <person name="Thiruvilangam P."/>
            <person name="Bhonagiri V."/>
            <person name="Waters C."/>
            <person name="Tu K.C."/>
            <person name="Irgon J."/>
            <person name="Wilson R.K."/>
        </authorList>
    </citation>
    <scope>NUCLEOTIDE SEQUENCE [LARGE SCALE GENOMIC DNA]</scope>
    <source>
        <strain>ATCC BAA-1116 / BB120</strain>
    </source>
</reference>
<accession>A7MSY2</accession>
<name>AROB_VIBC1</name>
<keyword id="KW-0028">Amino-acid biosynthesis</keyword>
<keyword id="KW-0057">Aromatic amino acid biosynthesis</keyword>
<keyword id="KW-0170">Cobalt</keyword>
<keyword id="KW-0963">Cytoplasm</keyword>
<keyword id="KW-0456">Lyase</keyword>
<keyword id="KW-0479">Metal-binding</keyword>
<keyword id="KW-0520">NAD</keyword>
<keyword id="KW-0547">Nucleotide-binding</keyword>
<keyword id="KW-0862">Zinc</keyword>
<gene>
    <name evidence="1" type="primary">aroB</name>
    <name type="ordered locus">VIBHAR_00027</name>
</gene>
<organism>
    <name type="scientific">Vibrio campbellii (strain ATCC BAA-1116)</name>
    <dbReference type="NCBI Taxonomy" id="2902295"/>
    <lineage>
        <taxon>Bacteria</taxon>
        <taxon>Pseudomonadati</taxon>
        <taxon>Pseudomonadota</taxon>
        <taxon>Gammaproteobacteria</taxon>
        <taxon>Vibrionales</taxon>
        <taxon>Vibrionaceae</taxon>
        <taxon>Vibrio</taxon>
    </lineage>
</organism>
<evidence type="ECO:0000255" key="1">
    <source>
        <dbReference type="HAMAP-Rule" id="MF_00110"/>
    </source>
</evidence>
<comment type="function">
    <text evidence="1">Catalyzes the conversion of 3-deoxy-D-arabino-heptulosonate 7-phosphate (DAHP) to dehydroquinate (DHQ).</text>
</comment>
<comment type="catalytic activity">
    <reaction evidence="1">
        <text>7-phospho-2-dehydro-3-deoxy-D-arabino-heptonate = 3-dehydroquinate + phosphate</text>
        <dbReference type="Rhea" id="RHEA:21968"/>
        <dbReference type="ChEBI" id="CHEBI:32364"/>
        <dbReference type="ChEBI" id="CHEBI:43474"/>
        <dbReference type="ChEBI" id="CHEBI:58394"/>
        <dbReference type="EC" id="4.2.3.4"/>
    </reaction>
</comment>
<comment type="cofactor">
    <cofactor evidence="1">
        <name>Co(2+)</name>
        <dbReference type="ChEBI" id="CHEBI:48828"/>
    </cofactor>
    <cofactor evidence="1">
        <name>Zn(2+)</name>
        <dbReference type="ChEBI" id="CHEBI:29105"/>
    </cofactor>
    <text evidence="1">Binds 1 divalent metal cation per subunit. Can use either Co(2+) or Zn(2+).</text>
</comment>
<comment type="cofactor">
    <cofactor evidence="1">
        <name>NAD(+)</name>
        <dbReference type="ChEBI" id="CHEBI:57540"/>
    </cofactor>
</comment>
<comment type="pathway">
    <text evidence="1">Metabolic intermediate biosynthesis; chorismate biosynthesis; chorismate from D-erythrose 4-phosphate and phosphoenolpyruvate: step 2/7.</text>
</comment>
<comment type="subcellular location">
    <subcellularLocation>
        <location evidence="1">Cytoplasm</location>
    </subcellularLocation>
</comment>
<comment type="similarity">
    <text evidence="1">Belongs to the sugar phosphate cyclases superfamily. Dehydroquinate synthase family.</text>
</comment>
<protein>
    <recommendedName>
        <fullName evidence="1">3-dehydroquinate synthase</fullName>
        <shortName evidence="1">DHQS</shortName>
        <ecNumber evidence="1">4.2.3.4</ecNumber>
    </recommendedName>
</protein>
<feature type="chain" id="PRO_1000094653" description="3-dehydroquinate synthase">
    <location>
        <begin position="1"/>
        <end position="366"/>
    </location>
</feature>
<feature type="binding site" evidence="1">
    <location>
        <begin position="75"/>
        <end position="80"/>
    </location>
    <ligand>
        <name>NAD(+)</name>
        <dbReference type="ChEBI" id="CHEBI:57540"/>
    </ligand>
</feature>
<feature type="binding site" evidence="1">
    <location>
        <begin position="109"/>
        <end position="113"/>
    </location>
    <ligand>
        <name>NAD(+)</name>
        <dbReference type="ChEBI" id="CHEBI:57540"/>
    </ligand>
</feature>
<feature type="binding site" evidence="1">
    <location>
        <begin position="133"/>
        <end position="134"/>
    </location>
    <ligand>
        <name>NAD(+)</name>
        <dbReference type="ChEBI" id="CHEBI:57540"/>
    </ligand>
</feature>
<feature type="binding site" evidence="1">
    <location>
        <position position="146"/>
    </location>
    <ligand>
        <name>NAD(+)</name>
        <dbReference type="ChEBI" id="CHEBI:57540"/>
    </ligand>
</feature>
<feature type="binding site" evidence="1">
    <location>
        <position position="155"/>
    </location>
    <ligand>
        <name>NAD(+)</name>
        <dbReference type="ChEBI" id="CHEBI:57540"/>
    </ligand>
</feature>
<feature type="binding site" evidence="1">
    <location>
        <begin position="173"/>
        <end position="176"/>
    </location>
    <ligand>
        <name>NAD(+)</name>
        <dbReference type="ChEBI" id="CHEBI:57540"/>
    </ligand>
</feature>
<feature type="binding site" evidence="1">
    <location>
        <position position="188"/>
    </location>
    <ligand>
        <name>Zn(2+)</name>
        <dbReference type="ChEBI" id="CHEBI:29105"/>
    </ligand>
</feature>
<feature type="binding site" evidence="1">
    <location>
        <position position="251"/>
    </location>
    <ligand>
        <name>Zn(2+)</name>
        <dbReference type="ChEBI" id="CHEBI:29105"/>
    </ligand>
</feature>
<feature type="binding site" evidence="1">
    <location>
        <position position="268"/>
    </location>
    <ligand>
        <name>Zn(2+)</name>
        <dbReference type="ChEBI" id="CHEBI:29105"/>
    </ligand>
</feature>
<dbReference type="EC" id="4.2.3.4" evidence="1"/>
<dbReference type="EMBL" id="CP000789">
    <property type="protein sequence ID" value="ABU69087.1"/>
    <property type="molecule type" value="Genomic_DNA"/>
</dbReference>
<dbReference type="RefSeq" id="WP_012126430.1">
    <property type="nucleotide sequence ID" value="NC_009783.1"/>
</dbReference>
<dbReference type="SMR" id="A7MSY2"/>
<dbReference type="KEGG" id="vha:VIBHAR_00027"/>
<dbReference type="PATRIC" id="fig|338187.25.peg.2496"/>
<dbReference type="UniPathway" id="UPA00053">
    <property type="reaction ID" value="UER00085"/>
</dbReference>
<dbReference type="Proteomes" id="UP000008152">
    <property type="component" value="Chromosome I"/>
</dbReference>
<dbReference type="GO" id="GO:0005737">
    <property type="term" value="C:cytoplasm"/>
    <property type="evidence" value="ECO:0007669"/>
    <property type="project" value="UniProtKB-SubCell"/>
</dbReference>
<dbReference type="GO" id="GO:0003856">
    <property type="term" value="F:3-dehydroquinate synthase activity"/>
    <property type="evidence" value="ECO:0007669"/>
    <property type="project" value="UniProtKB-UniRule"/>
</dbReference>
<dbReference type="GO" id="GO:0046872">
    <property type="term" value="F:metal ion binding"/>
    <property type="evidence" value="ECO:0007669"/>
    <property type="project" value="UniProtKB-KW"/>
</dbReference>
<dbReference type="GO" id="GO:0000166">
    <property type="term" value="F:nucleotide binding"/>
    <property type="evidence" value="ECO:0007669"/>
    <property type="project" value="UniProtKB-KW"/>
</dbReference>
<dbReference type="GO" id="GO:0008652">
    <property type="term" value="P:amino acid biosynthetic process"/>
    <property type="evidence" value="ECO:0007669"/>
    <property type="project" value="UniProtKB-KW"/>
</dbReference>
<dbReference type="GO" id="GO:0009073">
    <property type="term" value="P:aromatic amino acid family biosynthetic process"/>
    <property type="evidence" value="ECO:0007669"/>
    <property type="project" value="UniProtKB-KW"/>
</dbReference>
<dbReference type="GO" id="GO:0009423">
    <property type="term" value="P:chorismate biosynthetic process"/>
    <property type="evidence" value="ECO:0007669"/>
    <property type="project" value="UniProtKB-UniRule"/>
</dbReference>
<dbReference type="CDD" id="cd08195">
    <property type="entry name" value="DHQS"/>
    <property type="match status" value="1"/>
</dbReference>
<dbReference type="FunFam" id="1.20.1090.10:FF:000002">
    <property type="entry name" value="3-dehydroquinate synthase"/>
    <property type="match status" value="1"/>
</dbReference>
<dbReference type="FunFam" id="3.40.50.1970:FF:000001">
    <property type="entry name" value="3-dehydroquinate synthase"/>
    <property type="match status" value="1"/>
</dbReference>
<dbReference type="Gene3D" id="3.40.50.1970">
    <property type="match status" value="1"/>
</dbReference>
<dbReference type="Gene3D" id="1.20.1090.10">
    <property type="entry name" value="Dehydroquinate synthase-like - alpha domain"/>
    <property type="match status" value="1"/>
</dbReference>
<dbReference type="HAMAP" id="MF_00110">
    <property type="entry name" value="DHQ_synthase"/>
    <property type="match status" value="1"/>
</dbReference>
<dbReference type="InterPro" id="IPR050071">
    <property type="entry name" value="Dehydroquinate_synthase"/>
</dbReference>
<dbReference type="InterPro" id="IPR016037">
    <property type="entry name" value="DHQ_synth_AroB"/>
</dbReference>
<dbReference type="InterPro" id="IPR030963">
    <property type="entry name" value="DHQ_synth_fam"/>
</dbReference>
<dbReference type="InterPro" id="IPR030960">
    <property type="entry name" value="DHQS/DOIS_N"/>
</dbReference>
<dbReference type="InterPro" id="IPR056179">
    <property type="entry name" value="DHQS_C"/>
</dbReference>
<dbReference type="NCBIfam" id="TIGR01357">
    <property type="entry name" value="aroB"/>
    <property type="match status" value="1"/>
</dbReference>
<dbReference type="PANTHER" id="PTHR43622">
    <property type="entry name" value="3-DEHYDROQUINATE SYNTHASE"/>
    <property type="match status" value="1"/>
</dbReference>
<dbReference type="PANTHER" id="PTHR43622:SF7">
    <property type="entry name" value="3-DEHYDROQUINATE SYNTHASE, CHLOROPLASTIC"/>
    <property type="match status" value="1"/>
</dbReference>
<dbReference type="Pfam" id="PF01761">
    <property type="entry name" value="DHQ_synthase"/>
    <property type="match status" value="1"/>
</dbReference>
<dbReference type="Pfam" id="PF24621">
    <property type="entry name" value="DHQS_C"/>
    <property type="match status" value="1"/>
</dbReference>
<dbReference type="PIRSF" id="PIRSF001455">
    <property type="entry name" value="DHQ_synth"/>
    <property type="match status" value="1"/>
</dbReference>
<dbReference type="SUPFAM" id="SSF56796">
    <property type="entry name" value="Dehydroquinate synthase-like"/>
    <property type="match status" value="1"/>
</dbReference>